<accession>P49593</accession>
<accession>A8K6G3</accession>
<accession>B7Z2C3</accession>
<accession>Q96PM2</accession>
<feature type="chain" id="PRO_0000057758" description="Protein phosphatase 1F">
    <location>
        <begin position="1"/>
        <end position="454"/>
    </location>
</feature>
<feature type="domain" description="PPM-type phosphatase" evidence="2">
    <location>
        <begin position="156"/>
        <end position="413"/>
    </location>
</feature>
<feature type="region of interest" description="Disordered" evidence="3">
    <location>
        <begin position="1"/>
        <end position="28"/>
    </location>
</feature>
<feature type="region of interest" description="Disordered" evidence="3">
    <location>
        <begin position="419"/>
        <end position="454"/>
    </location>
</feature>
<feature type="compositionally biased region" description="Polar residues" evidence="3">
    <location>
        <begin position="1"/>
        <end position="12"/>
    </location>
</feature>
<feature type="binding site" evidence="1">
    <location>
        <position position="198"/>
    </location>
    <ligand>
        <name>Mn(2+)</name>
        <dbReference type="ChEBI" id="CHEBI:29035"/>
        <label>1</label>
    </ligand>
</feature>
<feature type="binding site" evidence="1">
    <location>
        <position position="198"/>
    </location>
    <ligand>
        <name>Mn(2+)</name>
        <dbReference type="ChEBI" id="CHEBI:29035"/>
        <label>2</label>
    </ligand>
</feature>
<feature type="binding site" evidence="1">
    <location>
        <position position="199"/>
    </location>
    <ligand>
        <name>Mn(2+)</name>
        <dbReference type="ChEBI" id="CHEBI:29035"/>
        <label>1</label>
    </ligand>
</feature>
<feature type="binding site" evidence="1">
    <location>
        <position position="360"/>
    </location>
    <ligand>
        <name>Mn(2+)</name>
        <dbReference type="ChEBI" id="CHEBI:29035"/>
        <label>2</label>
    </ligand>
</feature>
<feature type="binding site" evidence="1">
    <location>
        <position position="404"/>
    </location>
    <ligand>
        <name>Mn(2+)</name>
        <dbReference type="ChEBI" id="CHEBI:29035"/>
        <label>2</label>
    </ligand>
</feature>
<feature type="modified residue" description="Phosphoserine" evidence="9">
    <location>
        <position position="454"/>
    </location>
</feature>
<feature type="splice variant" id="VSP_056483" description="In isoform 2." evidence="7">
    <original>MSSGAPQKSSPMASG</original>
    <variation>MGLCPSTRETAPPAV</variation>
    <location>
        <begin position="1"/>
        <end position="15"/>
    </location>
</feature>
<feature type="splice variant" id="VSP_056484" description="In isoform 2." evidence="7">
    <location>
        <begin position="16"/>
        <end position="119"/>
    </location>
</feature>
<feature type="sequence variant" id="VAR_050620" description="In dbSNP:rs9610645.">
    <original>R</original>
    <variation>C</variation>
    <location>
        <position position="132"/>
    </location>
</feature>
<feature type="sequence variant" id="VAR_036520" description="In a colorectal cancer sample; somatic mutation; dbSNP:rs1318162463." evidence="5">
    <original>R</original>
    <variation>Q</variation>
    <location>
        <position position="296"/>
    </location>
</feature>
<feature type="sequence variant" id="VAR_086701" description="Found in a patient with sclerosing cholangitis short stature hypothyroidism and abnormal tongue pigmentation; uncertain significance; dbSNP:rs1395693423." evidence="6">
    <original>R</original>
    <variation>C</variation>
    <location>
        <position position="302"/>
    </location>
</feature>
<feature type="sequence variant" id="VAR_036521" description="In a breast cancer sample; somatic mutation." evidence="5">
    <original>Q</original>
    <variation>K</variation>
    <location>
        <position position="417"/>
    </location>
</feature>
<feature type="sequence variant" id="VAR_024580" description="In dbSNP:rs2070507." evidence="4">
    <original>L</original>
    <variation>R</variation>
    <location>
        <position position="420"/>
    </location>
</feature>
<feature type="sequence conflict" description="In Ref. 1; AAL15579." evidence="8" ref="1">
    <original>G</original>
    <variation>D</variation>
    <location>
        <position position="202"/>
    </location>
</feature>
<dbReference type="EC" id="3.1.3.16"/>
<dbReference type="EMBL" id="AF305840">
    <property type="protein sequence ID" value="AAL15579.1"/>
    <property type="molecule type" value="mRNA"/>
</dbReference>
<dbReference type="EMBL" id="AF520615">
    <property type="protein sequence ID" value="AAM76059.1"/>
    <property type="molecule type" value="mRNA"/>
</dbReference>
<dbReference type="EMBL" id="D13640">
    <property type="protein sequence ID" value="BAA02803.2"/>
    <property type="status" value="ALT_INIT"/>
    <property type="molecule type" value="mRNA"/>
</dbReference>
<dbReference type="EMBL" id="AK291628">
    <property type="protein sequence ID" value="BAF84317.1"/>
    <property type="molecule type" value="mRNA"/>
</dbReference>
<dbReference type="EMBL" id="AK294557">
    <property type="protein sequence ID" value="BAH11809.1"/>
    <property type="molecule type" value="mRNA"/>
</dbReference>
<dbReference type="EMBL" id="AP000555">
    <property type="status" value="NOT_ANNOTATED_CDS"/>
    <property type="molecule type" value="Genomic_DNA"/>
</dbReference>
<dbReference type="EMBL" id="D86995">
    <property type="status" value="NOT_ANNOTATED_CDS"/>
    <property type="molecule type" value="Genomic_DNA"/>
</dbReference>
<dbReference type="EMBL" id="D87012">
    <property type="status" value="NOT_ANNOTATED_CDS"/>
    <property type="molecule type" value="Genomic_DNA"/>
</dbReference>
<dbReference type="EMBL" id="D87019">
    <property type="status" value="NOT_ANNOTATED_CDS"/>
    <property type="molecule type" value="Genomic_DNA"/>
</dbReference>
<dbReference type="CCDS" id="CCDS13796.1">
    <molecule id="P49593-1"/>
</dbReference>
<dbReference type="RefSeq" id="NP_055449.1">
    <molecule id="P49593-1"/>
    <property type="nucleotide sequence ID" value="NM_014634.4"/>
</dbReference>
<dbReference type="SMR" id="P49593"/>
<dbReference type="BioGRID" id="115005">
    <property type="interactions" value="73"/>
</dbReference>
<dbReference type="FunCoup" id="P49593">
    <property type="interactions" value="316"/>
</dbReference>
<dbReference type="IntAct" id="P49593">
    <property type="interactions" value="41"/>
</dbReference>
<dbReference type="MINT" id="P49593"/>
<dbReference type="STRING" id="9606.ENSP00000263212"/>
<dbReference type="DEPOD" id="PPM1F"/>
<dbReference type="GlyGen" id="P49593">
    <property type="glycosylation" value="3 sites, 1 N-linked glycan (1 site), 1 O-linked glycan (2 sites)"/>
</dbReference>
<dbReference type="iPTMnet" id="P49593"/>
<dbReference type="PhosphoSitePlus" id="P49593"/>
<dbReference type="BioMuta" id="PPM1F"/>
<dbReference type="DMDM" id="24638458"/>
<dbReference type="OGP" id="P49593"/>
<dbReference type="jPOST" id="P49593"/>
<dbReference type="MassIVE" id="P49593"/>
<dbReference type="PaxDb" id="9606-ENSP00000263212"/>
<dbReference type="PeptideAtlas" id="P49593"/>
<dbReference type="ProteomicsDB" id="56028">
    <molecule id="P49593-1"/>
</dbReference>
<dbReference type="ProteomicsDB" id="6430"/>
<dbReference type="Pumba" id="P49593"/>
<dbReference type="Antibodypedia" id="23605">
    <property type="antibodies" value="331 antibodies from 29 providers"/>
</dbReference>
<dbReference type="DNASU" id="9647"/>
<dbReference type="Ensembl" id="ENST00000263212.10">
    <molecule id="P49593-1"/>
    <property type="protein sequence ID" value="ENSP00000263212.5"/>
    <property type="gene ID" value="ENSG00000100034.14"/>
</dbReference>
<dbReference type="GeneID" id="9647"/>
<dbReference type="KEGG" id="hsa:9647"/>
<dbReference type="MANE-Select" id="ENST00000263212.10">
    <property type="protein sequence ID" value="ENSP00000263212.5"/>
    <property type="RefSeq nucleotide sequence ID" value="NM_014634.4"/>
    <property type="RefSeq protein sequence ID" value="NP_055449.1"/>
</dbReference>
<dbReference type="UCSC" id="uc002zvp.3">
    <molecule id="P49593-1"/>
    <property type="organism name" value="human"/>
</dbReference>
<dbReference type="AGR" id="HGNC:19388"/>
<dbReference type="CTD" id="9647"/>
<dbReference type="DisGeNET" id="9647"/>
<dbReference type="GeneCards" id="PPM1F"/>
<dbReference type="HGNC" id="HGNC:19388">
    <property type="gene designation" value="PPM1F"/>
</dbReference>
<dbReference type="HPA" id="ENSG00000100034">
    <property type="expression patterns" value="Low tissue specificity"/>
</dbReference>
<dbReference type="MalaCards" id="PPM1F"/>
<dbReference type="MIM" id="619309">
    <property type="type" value="gene"/>
</dbReference>
<dbReference type="neXtProt" id="NX_P49593"/>
<dbReference type="OpenTargets" id="ENSG00000100034"/>
<dbReference type="PharmGKB" id="PA134935566"/>
<dbReference type="VEuPathDB" id="HostDB:ENSG00000100034"/>
<dbReference type="eggNOG" id="KOG0698">
    <property type="taxonomic scope" value="Eukaryota"/>
</dbReference>
<dbReference type="GeneTree" id="ENSGT00940000158884"/>
<dbReference type="InParanoid" id="P49593"/>
<dbReference type="OMA" id="DEMFLFK"/>
<dbReference type="OrthoDB" id="10264738at2759"/>
<dbReference type="PAN-GO" id="P49593">
    <property type="GO annotations" value="5 GO annotations based on evolutionary models"/>
</dbReference>
<dbReference type="PhylomeDB" id="P49593"/>
<dbReference type="TreeFam" id="TF317617"/>
<dbReference type="PathwayCommons" id="P49593"/>
<dbReference type="Reactome" id="R-HSA-9617324">
    <property type="pathway name" value="Negative regulation of NMDA receptor-mediated neuronal transmission"/>
</dbReference>
<dbReference type="SignaLink" id="P49593"/>
<dbReference type="SIGNOR" id="P49593"/>
<dbReference type="BioGRID-ORCS" id="9647">
    <property type="hits" value="32 hits in 1175 CRISPR screens"/>
</dbReference>
<dbReference type="ChiTaRS" id="PPM1F">
    <property type="organism name" value="human"/>
</dbReference>
<dbReference type="GeneWiki" id="PPM1F"/>
<dbReference type="GenomeRNAi" id="9647"/>
<dbReference type="Pharos" id="P49593">
    <property type="development level" value="Tbio"/>
</dbReference>
<dbReference type="PRO" id="PR:P49593"/>
<dbReference type="Proteomes" id="UP000005640">
    <property type="component" value="Chromosome 22"/>
</dbReference>
<dbReference type="RNAct" id="P49593">
    <property type="molecule type" value="protein"/>
</dbReference>
<dbReference type="Bgee" id="ENSG00000100034">
    <property type="expression patterns" value="Expressed in monocyte and 198 other cell types or tissues"/>
</dbReference>
<dbReference type="ExpressionAtlas" id="P49593">
    <property type="expression patterns" value="baseline and differential"/>
</dbReference>
<dbReference type="GO" id="GO:0005829">
    <property type="term" value="C:cytosol"/>
    <property type="evidence" value="ECO:0000314"/>
    <property type="project" value="UniProtKB"/>
</dbReference>
<dbReference type="GO" id="GO:0005634">
    <property type="term" value="C:nucleus"/>
    <property type="evidence" value="ECO:0000318"/>
    <property type="project" value="GO_Central"/>
</dbReference>
<dbReference type="GO" id="GO:0048471">
    <property type="term" value="C:perinuclear region of cytoplasm"/>
    <property type="evidence" value="ECO:0007669"/>
    <property type="project" value="Ensembl"/>
</dbReference>
<dbReference type="GO" id="GO:0032991">
    <property type="term" value="C:protein-containing complex"/>
    <property type="evidence" value="ECO:0000314"/>
    <property type="project" value="UniProtKB"/>
</dbReference>
<dbReference type="GO" id="GO:0033192">
    <property type="term" value="F:calmodulin-dependent protein phosphatase activity"/>
    <property type="evidence" value="ECO:0000314"/>
    <property type="project" value="UniProtKB"/>
</dbReference>
<dbReference type="GO" id="GO:0046872">
    <property type="term" value="F:metal ion binding"/>
    <property type="evidence" value="ECO:0007669"/>
    <property type="project" value="UniProtKB-KW"/>
</dbReference>
<dbReference type="GO" id="GO:0004722">
    <property type="term" value="F:protein serine/threonine phosphatase activity"/>
    <property type="evidence" value="ECO:0000314"/>
    <property type="project" value="UniProtKB"/>
</dbReference>
<dbReference type="GO" id="GO:0008138">
    <property type="term" value="F:protein tyrosine/serine/threonine phosphatase activity"/>
    <property type="evidence" value="ECO:0000315"/>
    <property type="project" value="BHF-UCL"/>
</dbReference>
<dbReference type="GO" id="GO:0006915">
    <property type="term" value="P:apoptotic process"/>
    <property type="evidence" value="ECO:0007669"/>
    <property type="project" value="UniProtKB-KW"/>
</dbReference>
<dbReference type="GO" id="GO:0071466">
    <property type="term" value="P:cellular response to xenobiotic stimulus"/>
    <property type="evidence" value="ECO:0000314"/>
    <property type="project" value="UniProtKB"/>
</dbReference>
<dbReference type="GO" id="GO:0035556">
    <property type="term" value="P:intracellular signal transduction"/>
    <property type="evidence" value="ECO:0000314"/>
    <property type="project" value="UniProtKB"/>
</dbReference>
<dbReference type="GO" id="GO:2000048">
    <property type="term" value="P:negative regulation of cell-cell adhesion mediated by cadherin"/>
    <property type="evidence" value="ECO:0000315"/>
    <property type="project" value="BHF-UCL"/>
</dbReference>
<dbReference type="GO" id="GO:0045892">
    <property type="term" value="P:negative regulation of DNA-templated transcription"/>
    <property type="evidence" value="ECO:0000315"/>
    <property type="project" value="UniProtKB"/>
</dbReference>
<dbReference type="GO" id="GO:0051224">
    <property type="term" value="P:negative regulation of protein transport"/>
    <property type="evidence" value="ECO:0000315"/>
    <property type="project" value="BHF-UCL"/>
</dbReference>
<dbReference type="GO" id="GO:0030335">
    <property type="term" value="P:positive regulation of cell migration"/>
    <property type="evidence" value="ECO:0000316"/>
    <property type="project" value="ARUK-UCL"/>
</dbReference>
<dbReference type="GO" id="GO:0010811">
    <property type="term" value="P:positive regulation of cell-substrate adhesion"/>
    <property type="evidence" value="ECO:0000315"/>
    <property type="project" value="UniProtKB"/>
</dbReference>
<dbReference type="GO" id="GO:0050921">
    <property type="term" value="P:positive regulation of chemotaxis"/>
    <property type="evidence" value="ECO:0000315"/>
    <property type="project" value="UniProtKB"/>
</dbReference>
<dbReference type="GO" id="GO:0010634">
    <property type="term" value="P:positive regulation of epithelial cell migration"/>
    <property type="evidence" value="ECO:0000315"/>
    <property type="project" value="UniProtKB"/>
</dbReference>
<dbReference type="GO" id="GO:0051894">
    <property type="term" value="P:positive regulation of focal adhesion assembly"/>
    <property type="evidence" value="ECO:0000315"/>
    <property type="project" value="UniProtKB"/>
</dbReference>
<dbReference type="GO" id="GO:0010628">
    <property type="term" value="P:positive regulation of gene expression"/>
    <property type="evidence" value="ECO:0000315"/>
    <property type="project" value="UniProtKB"/>
</dbReference>
<dbReference type="GO" id="GO:0045927">
    <property type="term" value="P:positive regulation of growth"/>
    <property type="evidence" value="ECO:0000315"/>
    <property type="project" value="UniProtKB"/>
</dbReference>
<dbReference type="GO" id="GO:0051496">
    <property type="term" value="P:positive regulation of stress fiber assembly"/>
    <property type="evidence" value="ECO:0000314"/>
    <property type="project" value="UniProtKB"/>
</dbReference>
<dbReference type="GO" id="GO:0032880">
    <property type="term" value="P:regulation of protein localization"/>
    <property type="evidence" value="ECO:0000315"/>
    <property type="project" value="BHF-UCL"/>
</dbReference>
<dbReference type="GO" id="GO:0007165">
    <property type="term" value="P:signal transduction"/>
    <property type="evidence" value="ECO:0000318"/>
    <property type="project" value="GO_Central"/>
</dbReference>
<dbReference type="CDD" id="cd00143">
    <property type="entry name" value="PP2Cc"/>
    <property type="match status" value="1"/>
</dbReference>
<dbReference type="FunFam" id="3.60.40.10:FF:000032">
    <property type="entry name" value="Protein phosphatase, Mg2+/Mn2+-dependent, 1F"/>
    <property type="match status" value="1"/>
</dbReference>
<dbReference type="Gene3D" id="3.60.40.10">
    <property type="entry name" value="PPM-type phosphatase domain"/>
    <property type="match status" value="1"/>
</dbReference>
<dbReference type="InterPro" id="IPR015655">
    <property type="entry name" value="PP2C"/>
</dbReference>
<dbReference type="InterPro" id="IPR000222">
    <property type="entry name" value="PP2C_BS"/>
</dbReference>
<dbReference type="InterPro" id="IPR036457">
    <property type="entry name" value="PPM-type-like_dom_sf"/>
</dbReference>
<dbReference type="InterPro" id="IPR001932">
    <property type="entry name" value="PPM-type_phosphatase-like_dom"/>
</dbReference>
<dbReference type="PANTHER" id="PTHR13832:SF233">
    <property type="entry name" value="PROTEIN PHOSPHATASE 1F"/>
    <property type="match status" value="1"/>
</dbReference>
<dbReference type="PANTHER" id="PTHR13832">
    <property type="entry name" value="PROTEIN PHOSPHATASE 2C"/>
    <property type="match status" value="1"/>
</dbReference>
<dbReference type="Pfam" id="PF00481">
    <property type="entry name" value="PP2C"/>
    <property type="match status" value="1"/>
</dbReference>
<dbReference type="SMART" id="SM00331">
    <property type="entry name" value="PP2C_SIG"/>
    <property type="match status" value="1"/>
</dbReference>
<dbReference type="SMART" id="SM00332">
    <property type="entry name" value="PP2Cc"/>
    <property type="match status" value="1"/>
</dbReference>
<dbReference type="SUPFAM" id="SSF81606">
    <property type="entry name" value="PP2C-like"/>
    <property type="match status" value="1"/>
</dbReference>
<dbReference type="PROSITE" id="PS01032">
    <property type="entry name" value="PPM_1"/>
    <property type="match status" value="1"/>
</dbReference>
<dbReference type="PROSITE" id="PS51746">
    <property type="entry name" value="PPM_2"/>
    <property type="match status" value="1"/>
</dbReference>
<keyword id="KW-0025">Alternative splicing</keyword>
<keyword id="KW-0053">Apoptosis</keyword>
<keyword id="KW-0378">Hydrolase</keyword>
<keyword id="KW-0460">Magnesium</keyword>
<keyword id="KW-0464">Manganese</keyword>
<keyword id="KW-0479">Metal-binding</keyword>
<keyword id="KW-0597">Phosphoprotein</keyword>
<keyword id="KW-0904">Protein phosphatase</keyword>
<keyword id="KW-1267">Proteomics identification</keyword>
<keyword id="KW-1185">Reference proteome</keyword>
<comment type="function">
    <text>Dephosphorylates and concomitantly deactivates CaM-kinase II activated upon autophosphorylation, and CaM-kinases IV and I activated upon phosphorylation by CaM-kinase kinase. Promotes apoptosis.</text>
</comment>
<comment type="catalytic activity">
    <reaction>
        <text>O-phospho-L-seryl-[protein] + H2O = L-seryl-[protein] + phosphate</text>
        <dbReference type="Rhea" id="RHEA:20629"/>
        <dbReference type="Rhea" id="RHEA-COMP:9863"/>
        <dbReference type="Rhea" id="RHEA-COMP:11604"/>
        <dbReference type="ChEBI" id="CHEBI:15377"/>
        <dbReference type="ChEBI" id="CHEBI:29999"/>
        <dbReference type="ChEBI" id="CHEBI:43474"/>
        <dbReference type="ChEBI" id="CHEBI:83421"/>
        <dbReference type="EC" id="3.1.3.16"/>
    </reaction>
</comment>
<comment type="catalytic activity">
    <reaction>
        <text>O-phospho-L-threonyl-[protein] + H2O = L-threonyl-[protein] + phosphate</text>
        <dbReference type="Rhea" id="RHEA:47004"/>
        <dbReference type="Rhea" id="RHEA-COMP:11060"/>
        <dbReference type="Rhea" id="RHEA-COMP:11605"/>
        <dbReference type="ChEBI" id="CHEBI:15377"/>
        <dbReference type="ChEBI" id="CHEBI:30013"/>
        <dbReference type="ChEBI" id="CHEBI:43474"/>
        <dbReference type="ChEBI" id="CHEBI:61977"/>
        <dbReference type="EC" id="3.1.3.16"/>
    </reaction>
</comment>
<comment type="cofactor">
    <cofactor evidence="1">
        <name>Mg(2+)</name>
        <dbReference type="ChEBI" id="CHEBI:18420"/>
    </cofactor>
    <cofactor evidence="1">
        <name>Mn(2+)</name>
        <dbReference type="ChEBI" id="CHEBI:29035"/>
    </cofactor>
    <text evidence="1">Binds 2 magnesium or manganese ions per subunit.</text>
</comment>
<comment type="subunit">
    <text>Associates with FEM1B.</text>
</comment>
<comment type="interaction">
    <interactant intactId="EBI-719945">
        <id>P49593</id>
    </interactant>
    <interactant intactId="EBI-3959709">
        <id>O60610</id>
        <label>DIAPH1</label>
    </interactant>
    <organismsDiffer>false</organismsDiffer>
    <experiments>3</experiments>
</comment>
<comment type="interaction">
    <interactant intactId="EBI-719945">
        <id>P49593</id>
    </interactant>
    <interactant intactId="EBI-310482">
        <id>Q9UK73</id>
        <label>FEM1B</label>
    </interactant>
    <organismsDiffer>false</organismsDiffer>
    <experiments>2</experiments>
</comment>
<comment type="interaction">
    <interactant intactId="EBI-719945">
        <id>P49593</id>
    </interactant>
    <interactant intactId="EBI-937199">
        <id>Q8C078</id>
        <label>Camkk2</label>
    </interactant>
    <organismsDiffer>true</organismsDiffer>
    <experiments>2</experiments>
</comment>
<comment type="alternative products">
    <event type="alternative splicing"/>
    <isoform>
        <id>P49593-1</id>
        <name>1</name>
        <sequence type="displayed"/>
    </isoform>
    <isoform>
        <id>P49593-2</id>
        <name>2</name>
        <sequence type="described" ref="VSP_056483 VSP_056484"/>
    </isoform>
</comment>
<comment type="disease">
    <text evidence="6">Defects in PPM1F may be a cause of sclerosing cholangitis, short stature, hypothyroidism, and abnormal tongue pigmentation.</text>
</comment>
<comment type="similarity">
    <text evidence="8">Belongs to the PP2C family.</text>
</comment>
<comment type="sequence caution" evidence="8">
    <conflict type="erroneous initiation">
        <sequence resource="EMBL-CDS" id="BAA02803"/>
    </conflict>
    <text>Extended N-terminus.</text>
</comment>
<name>PPM1F_HUMAN</name>
<evidence type="ECO:0000250" key="1"/>
<evidence type="ECO:0000255" key="2">
    <source>
        <dbReference type="PROSITE-ProRule" id="PRU01082"/>
    </source>
</evidence>
<evidence type="ECO:0000256" key="3">
    <source>
        <dbReference type="SAM" id="MobiDB-lite"/>
    </source>
</evidence>
<evidence type="ECO:0000269" key="4">
    <source>
    </source>
</evidence>
<evidence type="ECO:0000269" key="5">
    <source>
    </source>
</evidence>
<evidence type="ECO:0000269" key="6">
    <source>
    </source>
</evidence>
<evidence type="ECO:0000303" key="7">
    <source>
    </source>
</evidence>
<evidence type="ECO:0000305" key="8"/>
<evidence type="ECO:0007744" key="9">
    <source>
    </source>
</evidence>
<proteinExistence type="evidence at protein level"/>
<gene>
    <name type="primary">PPM1F</name>
    <name type="synonym">KIAA0015</name>
    <name type="synonym">POPX2</name>
</gene>
<organism>
    <name type="scientific">Homo sapiens</name>
    <name type="common">Human</name>
    <dbReference type="NCBI Taxonomy" id="9606"/>
    <lineage>
        <taxon>Eukaryota</taxon>
        <taxon>Metazoa</taxon>
        <taxon>Chordata</taxon>
        <taxon>Craniata</taxon>
        <taxon>Vertebrata</taxon>
        <taxon>Euteleostomi</taxon>
        <taxon>Mammalia</taxon>
        <taxon>Eutheria</taxon>
        <taxon>Euarchontoglires</taxon>
        <taxon>Primates</taxon>
        <taxon>Haplorrhini</taxon>
        <taxon>Catarrhini</taxon>
        <taxon>Hominidae</taxon>
        <taxon>Homo</taxon>
    </lineage>
</organism>
<sequence>MSSGAPQKSSPMASGAEETPGFLDTLLQDFPALLNPEDPLPWKAPGTVLSQEEVEGELAELAMGFLGSRKAPPPLAAALAHEAVSQLLQTDLSEFRKLPREEEEEEEDDDEEEKAPVTLLDAQSLAQSFFNRLWEVAGQWQKQVPLAARASQRQWLVSIHAIRNTRRKMEDRHVSLPSFNQLFGLSDPVNRAYFAVFDGHGGVDAARYAAVHVHTNAARQPELPTDPEGALREAFRRTDQMFLRKAKRERLQSGTTGVCALIAGATLHVAWLGDSQVILVQQGQVVKLMEPHRPERQDEKARIEALGGFVSHMDCWRVNGTLAVSRAIGDVFQKPYVSGEADAASRALTGSEDYLLLACDGFFDVVPHQEVVGLVQSHLTRQQGSGLRVAEELVAAARERGSHDNITVMVVFLRDPQELLEGGNQGEGDPQAEGRRQDLPSSLPEPETQAPPRS</sequence>
<reference key="1">
    <citation type="journal article" date="2001" name="J. Biol. Chem.">
        <title>The Caenorhabditis elegans sex-determining protein fem-2 and its human homologue, hFEM-2, are Ca2+/calmodulin-dependent protein kinase phosphatases that promote apoptosis.</title>
        <authorList>
            <person name="Tan K.M.L."/>
            <person name="Chan S.-L."/>
            <person name="Tan K.O."/>
            <person name="Yu V.C."/>
        </authorList>
    </citation>
    <scope>NUCLEOTIDE SEQUENCE [MRNA] (ISOFORM 1)</scope>
    <scope>INTERACTION WITH FEM1B</scope>
</reference>
<reference key="2">
    <citation type="journal article" date="2002" name="Curr. Biol.">
        <title>The p21-activated kinase PAK is negatively regulated by POPX1 and POPX2, a pair of serine/threonine phosphatases of the PP2C family.</title>
        <authorList>
            <person name="Koh C.-G."/>
            <person name="Tan E.-J."/>
            <person name="Manser E."/>
            <person name="Lim L."/>
        </authorList>
    </citation>
    <scope>NUCLEOTIDE SEQUENCE [MRNA] (ISOFORM 1)</scope>
</reference>
<reference key="3">
    <citation type="journal article" date="1994" name="DNA Res.">
        <title>Prediction of the coding sequences of unidentified human genes. I. The coding sequences of 40 new genes (KIAA0001-KIAA0040) deduced by analysis of randomly sampled cDNA clones from human immature myeloid cell line KG-1.</title>
        <authorList>
            <person name="Nomura N."/>
            <person name="Miyajima N."/>
            <person name="Sazuka T."/>
            <person name="Tanaka A."/>
            <person name="Kawarabayasi Y."/>
            <person name="Sato S."/>
            <person name="Nagase T."/>
            <person name="Seki N."/>
            <person name="Ishikawa K."/>
            <person name="Tabata S."/>
        </authorList>
    </citation>
    <scope>NUCLEOTIDE SEQUENCE [LARGE SCALE MRNA] (ISOFORM 1)</scope>
    <source>
        <tissue>Bone marrow</tissue>
    </source>
</reference>
<reference key="4">
    <citation type="journal article" date="2004" name="Nat. Genet.">
        <title>Complete sequencing and characterization of 21,243 full-length human cDNAs.</title>
        <authorList>
            <person name="Ota T."/>
            <person name="Suzuki Y."/>
            <person name="Nishikawa T."/>
            <person name="Otsuki T."/>
            <person name="Sugiyama T."/>
            <person name="Irie R."/>
            <person name="Wakamatsu A."/>
            <person name="Hayashi K."/>
            <person name="Sato H."/>
            <person name="Nagai K."/>
            <person name="Kimura K."/>
            <person name="Makita H."/>
            <person name="Sekine M."/>
            <person name="Obayashi M."/>
            <person name="Nishi T."/>
            <person name="Shibahara T."/>
            <person name="Tanaka T."/>
            <person name="Ishii S."/>
            <person name="Yamamoto J."/>
            <person name="Saito K."/>
            <person name="Kawai Y."/>
            <person name="Isono Y."/>
            <person name="Nakamura Y."/>
            <person name="Nagahari K."/>
            <person name="Murakami K."/>
            <person name="Yasuda T."/>
            <person name="Iwayanagi T."/>
            <person name="Wagatsuma M."/>
            <person name="Shiratori A."/>
            <person name="Sudo H."/>
            <person name="Hosoiri T."/>
            <person name="Kaku Y."/>
            <person name="Kodaira H."/>
            <person name="Kondo H."/>
            <person name="Sugawara M."/>
            <person name="Takahashi M."/>
            <person name="Kanda K."/>
            <person name="Yokoi T."/>
            <person name="Furuya T."/>
            <person name="Kikkawa E."/>
            <person name="Omura Y."/>
            <person name="Abe K."/>
            <person name="Kamihara K."/>
            <person name="Katsuta N."/>
            <person name="Sato K."/>
            <person name="Tanikawa M."/>
            <person name="Yamazaki M."/>
            <person name="Ninomiya K."/>
            <person name="Ishibashi T."/>
            <person name="Yamashita H."/>
            <person name="Murakawa K."/>
            <person name="Fujimori K."/>
            <person name="Tanai H."/>
            <person name="Kimata M."/>
            <person name="Watanabe M."/>
            <person name="Hiraoka S."/>
            <person name="Chiba Y."/>
            <person name="Ishida S."/>
            <person name="Ono Y."/>
            <person name="Takiguchi S."/>
            <person name="Watanabe S."/>
            <person name="Yosida M."/>
            <person name="Hotuta T."/>
            <person name="Kusano J."/>
            <person name="Kanehori K."/>
            <person name="Takahashi-Fujii A."/>
            <person name="Hara H."/>
            <person name="Tanase T.-O."/>
            <person name="Nomura Y."/>
            <person name="Togiya S."/>
            <person name="Komai F."/>
            <person name="Hara R."/>
            <person name="Takeuchi K."/>
            <person name="Arita M."/>
            <person name="Imose N."/>
            <person name="Musashino K."/>
            <person name="Yuuki H."/>
            <person name="Oshima A."/>
            <person name="Sasaki N."/>
            <person name="Aotsuka S."/>
            <person name="Yoshikawa Y."/>
            <person name="Matsunawa H."/>
            <person name="Ichihara T."/>
            <person name="Shiohata N."/>
            <person name="Sano S."/>
            <person name="Moriya S."/>
            <person name="Momiyama H."/>
            <person name="Satoh N."/>
            <person name="Takami S."/>
            <person name="Terashima Y."/>
            <person name="Suzuki O."/>
            <person name="Nakagawa S."/>
            <person name="Senoh A."/>
            <person name="Mizoguchi H."/>
            <person name="Goto Y."/>
            <person name="Shimizu F."/>
            <person name="Wakebe H."/>
            <person name="Hishigaki H."/>
            <person name="Watanabe T."/>
            <person name="Sugiyama A."/>
            <person name="Takemoto M."/>
            <person name="Kawakami B."/>
            <person name="Yamazaki M."/>
            <person name="Watanabe K."/>
            <person name="Kumagai A."/>
            <person name="Itakura S."/>
            <person name="Fukuzumi Y."/>
            <person name="Fujimori Y."/>
            <person name="Komiyama M."/>
            <person name="Tashiro H."/>
            <person name="Tanigami A."/>
            <person name="Fujiwara T."/>
            <person name="Ono T."/>
            <person name="Yamada K."/>
            <person name="Fujii Y."/>
            <person name="Ozaki K."/>
            <person name="Hirao M."/>
            <person name="Ohmori Y."/>
            <person name="Kawabata A."/>
            <person name="Hikiji T."/>
            <person name="Kobatake N."/>
            <person name="Inagaki H."/>
            <person name="Ikema Y."/>
            <person name="Okamoto S."/>
            <person name="Okitani R."/>
            <person name="Kawakami T."/>
            <person name="Noguchi S."/>
            <person name="Itoh T."/>
            <person name="Shigeta K."/>
            <person name="Senba T."/>
            <person name="Matsumura K."/>
            <person name="Nakajima Y."/>
            <person name="Mizuno T."/>
            <person name="Morinaga M."/>
            <person name="Sasaki M."/>
            <person name="Togashi T."/>
            <person name="Oyama M."/>
            <person name="Hata H."/>
            <person name="Watanabe M."/>
            <person name="Komatsu T."/>
            <person name="Mizushima-Sugano J."/>
            <person name="Satoh T."/>
            <person name="Shirai Y."/>
            <person name="Takahashi Y."/>
            <person name="Nakagawa K."/>
            <person name="Okumura K."/>
            <person name="Nagase T."/>
            <person name="Nomura N."/>
            <person name="Kikuchi H."/>
            <person name="Masuho Y."/>
            <person name="Yamashita R."/>
            <person name="Nakai K."/>
            <person name="Yada T."/>
            <person name="Nakamura Y."/>
            <person name="Ohara O."/>
            <person name="Isogai T."/>
            <person name="Sugano S."/>
        </authorList>
    </citation>
    <scope>NUCLEOTIDE SEQUENCE [LARGE SCALE MRNA] (ISOFORMS 1 AND 2)</scope>
    <scope>VARIANT ARG-420</scope>
    <source>
        <tissue>Amygdala</tissue>
        <tissue>Placenta</tissue>
    </source>
</reference>
<reference key="5">
    <citation type="journal article" date="1999" name="Nature">
        <title>The DNA sequence of human chromosome 22.</title>
        <authorList>
            <person name="Dunham I."/>
            <person name="Hunt A.R."/>
            <person name="Collins J.E."/>
            <person name="Bruskiewich R."/>
            <person name="Beare D.M."/>
            <person name="Clamp M."/>
            <person name="Smink L.J."/>
            <person name="Ainscough R."/>
            <person name="Almeida J.P."/>
            <person name="Babbage A.K."/>
            <person name="Bagguley C."/>
            <person name="Bailey J."/>
            <person name="Barlow K.F."/>
            <person name="Bates K.N."/>
            <person name="Beasley O.P."/>
            <person name="Bird C.P."/>
            <person name="Blakey S.E."/>
            <person name="Bridgeman A.M."/>
            <person name="Buck D."/>
            <person name="Burgess J."/>
            <person name="Burrill W.D."/>
            <person name="Burton J."/>
            <person name="Carder C."/>
            <person name="Carter N.P."/>
            <person name="Chen Y."/>
            <person name="Clark G."/>
            <person name="Clegg S.M."/>
            <person name="Cobley V.E."/>
            <person name="Cole C.G."/>
            <person name="Collier R.E."/>
            <person name="Connor R."/>
            <person name="Conroy D."/>
            <person name="Corby N.R."/>
            <person name="Coville G.J."/>
            <person name="Cox A.V."/>
            <person name="Davis J."/>
            <person name="Dawson E."/>
            <person name="Dhami P.D."/>
            <person name="Dockree C."/>
            <person name="Dodsworth S.J."/>
            <person name="Durbin R.M."/>
            <person name="Ellington A.G."/>
            <person name="Evans K.L."/>
            <person name="Fey J.M."/>
            <person name="Fleming K."/>
            <person name="French L."/>
            <person name="Garner A.A."/>
            <person name="Gilbert J.G.R."/>
            <person name="Goward M.E."/>
            <person name="Grafham D.V."/>
            <person name="Griffiths M.N.D."/>
            <person name="Hall C."/>
            <person name="Hall R.E."/>
            <person name="Hall-Tamlyn G."/>
            <person name="Heathcott R.W."/>
            <person name="Ho S."/>
            <person name="Holmes S."/>
            <person name="Hunt S.E."/>
            <person name="Jones M.C."/>
            <person name="Kershaw J."/>
            <person name="Kimberley A.M."/>
            <person name="King A."/>
            <person name="Laird G.K."/>
            <person name="Langford C.F."/>
            <person name="Leversha M.A."/>
            <person name="Lloyd C."/>
            <person name="Lloyd D.M."/>
            <person name="Martyn I.D."/>
            <person name="Mashreghi-Mohammadi M."/>
            <person name="Matthews L.H."/>
            <person name="Mccann O.T."/>
            <person name="Mcclay J."/>
            <person name="Mclaren S."/>
            <person name="McMurray A.A."/>
            <person name="Milne S.A."/>
            <person name="Mortimore B.J."/>
            <person name="Odell C.N."/>
            <person name="Pavitt R."/>
            <person name="Pearce A.V."/>
            <person name="Pearson D."/>
            <person name="Phillimore B.J.C.T."/>
            <person name="Phillips S.H."/>
            <person name="Plumb R.W."/>
            <person name="Ramsay H."/>
            <person name="Ramsey Y."/>
            <person name="Rogers L."/>
            <person name="Ross M.T."/>
            <person name="Scott C.E."/>
            <person name="Sehra H.K."/>
            <person name="Skuce C.D."/>
            <person name="Smalley S."/>
            <person name="Smith M.L."/>
            <person name="Soderlund C."/>
            <person name="Spragon L."/>
            <person name="Steward C.A."/>
            <person name="Sulston J.E."/>
            <person name="Swann R.M."/>
            <person name="Vaudin M."/>
            <person name="Wall M."/>
            <person name="Wallis J.M."/>
            <person name="Whiteley M.N."/>
            <person name="Willey D.L."/>
            <person name="Williams L."/>
            <person name="Williams S.A."/>
            <person name="Williamson H."/>
            <person name="Wilmer T.E."/>
            <person name="Wilming L."/>
            <person name="Wright C.L."/>
            <person name="Hubbard T."/>
            <person name="Bentley D.R."/>
            <person name="Beck S."/>
            <person name="Rogers J."/>
            <person name="Shimizu N."/>
            <person name="Minoshima S."/>
            <person name="Kawasaki K."/>
            <person name="Sasaki T."/>
            <person name="Asakawa S."/>
            <person name="Kudoh J."/>
            <person name="Shintani A."/>
            <person name="Shibuya K."/>
            <person name="Yoshizaki Y."/>
            <person name="Aoki N."/>
            <person name="Mitsuyama S."/>
            <person name="Roe B.A."/>
            <person name="Chen F."/>
            <person name="Chu L."/>
            <person name="Crabtree J."/>
            <person name="Deschamps S."/>
            <person name="Do A."/>
            <person name="Do T."/>
            <person name="Dorman A."/>
            <person name="Fang F."/>
            <person name="Fu Y."/>
            <person name="Hu P."/>
            <person name="Hua A."/>
            <person name="Kenton S."/>
            <person name="Lai H."/>
            <person name="Lao H.I."/>
            <person name="Lewis J."/>
            <person name="Lewis S."/>
            <person name="Lin S.-P."/>
            <person name="Loh P."/>
            <person name="Malaj E."/>
            <person name="Nguyen T."/>
            <person name="Pan H."/>
            <person name="Phan S."/>
            <person name="Qi S."/>
            <person name="Qian Y."/>
            <person name="Ray L."/>
            <person name="Ren Q."/>
            <person name="Shaull S."/>
            <person name="Sloan D."/>
            <person name="Song L."/>
            <person name="Wang Q."/>
            <person name="Wang Y."/>
            <person name="Wang Z."/>
            <person name="White J."/>
            <person name="Willingham D."/>
            <person name="Wu H."/>
            <person name="Yao Z."/>
            <person name="Zhan M."/>
            <person name="Zhang G."/>
            <person name="Chissoe S."/>
            <person name="Murray J."/>
            <person name="Miller N."/>
            <person name="Minx P."/>
            <person name="Fulton R."/>
            <person name="Johnson D."/>
            <person name="Bemis G."/>
            <person name="Bentley D."/>
            <person name="Bradshaw H."/>
            <person name="Bourne S."/>
            <person name="Cordes M."/>
            <person name="Du Z."/>
            <person name="Fulton L."/>
            <person name="Goela D."/>
            <person name="Graves T."/>
            <person name="Hawkins J."/>
            <person name="Hinds K."/>
            <person name="Kemp K."/>
            <person name="Latreille P."/>
            <person name="Layman D."/>
            <person name="Ozersky P."/>
            <person name="Rohlfing T."/>
            <person name="Scheet P."/>
            <person name="Walker C."/>
            <person name="Wamsley A."/>
            <person name="Wohldmann P."/>
            <person name="Pepin K."/>
            <person name="Nelson J."/>
            <person name="Korf I."/>
            <person name="Bedell J.A."/>
            <person name="Hillier L.W."/>
            <person name="Mardis E."/>
            <person name="Waterston R."/>
            <person name="Wilson R."/>
            <person name="Emanuel B.S."/>
            <person name="Shaikh T."/>
            <person name="Kurahashi H."/>
            <person name="Saitta S."/>
            <person name="Budarf M.L."/>
            <person name="McDermid H.E."/>
            <person name="Johnson A."/>
            <person name="Wong A.C.C."/>
            <person name="Morrow B.E."/>
            <person name="Edelmann L."/>
            <person name="Kim U.J."/>
            <person name="Shizuya H."/>
            <person name="Simon M.I."/>
            <person name="Dumanski J.P."/>
            <person name="Peyrard M."/>
            <person name="Kedra D."/>
            <person name="Seroussi E."/>
            <person name="Fransson I."/>
            <person name="Tapia I."/>
            <person name="Bruder C.E."/>
            <person name="O'Brien K.P."/>
            <person name="Wilkinson P."/>
            <person name="Bodenteich A."/>
            <person name="Hartman K."/>
            <person name="Hu X."/>
            <person name="Khan A.S."/>
            <person name="Lane L."/>
            <person name="Tilahun Y."/>
            <person name="Wright H."/>
        </authorList>
    </citation>
    <scope>NUCLEOTIDE SEQUENCE [LARGE SCALE GENOMIC DNA]</scope>
</reference>
<reference key="6">
    <citation type="journal article" date="2010" name="Sci. Signal.">
        <title>Quantitative phosphoproteomics reveals widespread full phosphorylation site occupancy during mitosis.</title>
        <authorList>
            <person name="Olsen J.V."/>
            <person name="Vermeulen M."/>
            <person name="Santamaria A."/>
            <person name="Kumar C."/>
            <person name="Miller M.L."/>
            <person name="Jensen L.J."/>
            <person name="Gnad F."/>
            <person name="Cox J."/>
            <person name="Jensen T.S."/>
            <person name="Nigg E.A."/>
            <person name="Brunak S."/>
            <person name="Mann M."/>
        </authorList>
    </citation>
    <scope>IDENTIFICATION BY MASS SPECTROMETRY [LARGE SCALE ANALYSIS]</scope>
    <source>
        <tissue>Cervix carcinoma</tissue>
    </source>
</reference>
<reference key="7">
    <citation type="journal article" date="2011" name="BMC Syst. Biol.">
        <title>Initial characterization of the human central proteome.</title>
        <authorList>
            <person name="Burkard T.R."/>
            <person name="Planyavsky M."/>
            <person name="Kaupe I."/>
            <person name="Breitwieser F.P."/>
            <person name="Buerckstuemmer T."/>
            <person name="Bennett K.L."/>
            <person name="Superti-Furga G."/>
            <person name="Colinge J."/>
        </authorList>
    </citation>
    <scope>IDENTIFICATION BY MASS SPECTROMETRY [LARGE SCALE ANALYSIS]</scope>
</reference>
<reference key="8">
    <citation type="journal article" date="2013" name="J. Proteome Res.">
        <title>Toward a comprehensive characterization of a human cancer cell phosphoproteome.</title>
        <authorList>
            <person name="Zhou H."/>
            <person name="Di Palma S."/>
            <person name="Preisinger C."/>
            <person name="Peng M."/>
            <person name="Polat A.N."/>
            <person name="Heck A.J."/>
            <person name="Mohammed S."/>
        </authorList>
    </citation>
    <scope>PHOSPHORYLATION [LARGE SCALE ANALYSIS] AT SER-454</scope>
    <scope>IDENTIFICATION BY MASS SPECTROMETRY [LARGE SCALE ANALYSIS]</scope>
    <source>
        <tissue>Erythroleukemia</tissue>
    </source>
</reference>
<reference key="9">
    <citation type="journal article" date="2006" name="Science">
        <title>The consensus coding sequences of human breast and colorectal cancers.</title>
        <authorList>
            <person name="Sjoeblom T."/>
            <person name="Jones S."/>
            <person name="Wood L.D."/>
            <person name="Parsons D.W."/>
            <person name="Lin J."/>
            <person name="Barber T.D."/>
            <person name="Mandelker D."/>
            <person name="Leary R.J."/>
            <person name="Ptak J."/>
            <person name="Silliman N."/>
            <person name="Szabo S."/>
            <person name="Buckhaults P."/>
            <person name="Farrell C."/>
            <person name="Meeh P."/>
            <person name="Markowitz S.D."/>
            <person name="Willis J."/>
            <person name="Dawson D."/>
            <person name="Willson J.K.V."/>
            <person name="Gazdar A.F."/>
            <person name="Hartigan J."/>
            <person name="Wu L."/>
            <person name="Liu C."/>
            <person name="Parmigiani G."/>
            <person name="Park B.H."/>
            <person name="Bachman K.E."/>
            <person name="Papadopoulos N."/>
            <person name="Vogelstein B."/>
            <person name="Kinzler K.W."/>
            <person name="Velculescu V.E."/>
        </authorList>
    </citation>
    <scope>VARIANTS [LARGE SCALE ANALYSIS] GLN-296 AND LYS-417</scope>
</reference>
<reference key="10">
    <citation type="journal article" date="2019" name="Genet. Med.">
        <title>Identification of novel loci for pediatric cholestatic liver disease defined by KIF12, PPM1F, USP53, LSR, and WDR83OS pathogenic variants.</title>
        <authorList>
            <person name="Maddirevula S."/>
            <person name="Alhebbi H."/>
            <person name="Alqahtani A."/>
            <person name="Algoufi T."/>
            <person name="Alsaif H.S."/>
            <person name="Ibrahim N."/>
            <person name="Abdulwahab F."/>
            <person name="Barr M."/>
            <person name="Alzaidan H."/>
            <person name="Almehaideb A."/>
            <person name="AlSasi O."/>
            <person name="Alhashem A."/>
            <person name="Hussaini H.A."/>
            <person name="Wali S."/>
            <person name="Alkuraya F.S."/>
        </authorList>
    </citation>
    <scope>VARIANT CYS-302</scope>
</reference>
<protein>
    <recommendedName>
        <fullName>Protein phosphatase 1F</fullName>
        <ecNumber>3.1.3.16</ecNumber>
    </recommendedName>
    <alternativeName>
        <fullName>Ca(2+)/calmodulin-dependent protein kinase phosphatase</fullName>
        <shortName>CaM-kinase phosphatase</shortName>
        <shortName>CaMKPase</shortName>
    </alternativeName>
    <alternativeName>
        <fullName>Partner of PIX 2</fullName>
    </alternativeName>
    <alternativeName>
        <fullName>Protein fem-2 homolog</fullName>
        <shortName>hFem-2</shortName>
    </alternativeName>
</protein>